<protein>
    <recommendedName>
        <fullName>Counting factor 50</fullName>
        <ecNumber>3.2.1.17</ecNumber>
    </recommendedName>
    <alternativeName>
        <fullName>1,4-beta-N-acetylmuramidase 1</fullName>
    </alternativeName>
    <alternativeName>
        <fullName>GH family 25 lysozyme 1</fullName>
    </alternativeName>
</protein>
<dbReference type="EC" id="3.2.1.17"/>
<dbReference type="EMBL" id="AF405695">
    <property type="protein sequence ID" value="AAL01036.1"/>
    <property type="molecule type" value="Genomic_DNA"/>
</dbReference>
<dbReference type="EMBL" id="AAFI02000011">
    <property type="protein sequence ID" value="EAL70628.1"/>
    <property type="molecule type" value="Genomic_DNA"/>
</dbReference>
<dbReference type="EMBL" id="AAFI02000009">
    <property type="protein sequence ID" value="EAL70805.1"/>
    <property type="molecule type" value="Genomic_DNA"/>
</dbReference>
<dbReference type="RefSeq" id="XP_644554.1">
    <property type="nucleotide sequence ID" value="XM_639462.1"/>
</dbReference>
<dbReference type="RefSeq" id="XP_644697.1">
    <property type="nucleotide sequence ID" value="XM_639605.1"/>
</dbReference>
<dbReference type="SMR" id="Q556R7"/>
<dbReference type="FunCoup" id="Q556R7">
    <property type="interactions" value="4"/>
</dbReference>
<dbReference type="STRING" id="44689.Q556R7"/>
<dbReference type="GlyCosmos" id="Q556R7">
    <property type="glycosylation" value="2 sites, No reported glycans"/>
</dbReference>
<dbReference type="GlyGen" id="Q556R7">
    <property type="glycosylation" value="2 sites"/>
</dbReference>
<dbReference type="PaxDb" id="44689-DDB0185090"/>
<dbReference type="EnsemblProtists" id="EAL70628">
    <property type="protein sequence ID" value="EAL70628"/>
    <property type="gene ID" value="DDB_G0273875"/>
</dbReference>
<dbReference type="EnsemblProtists" id="EAL70805">
    <property type="protein sequence ID" value="EAL70805"/>
    <property type="gene ID" value="DDB_G0273175"/>
</dbReference>
<dbReference type="GeneID" id="8618796"/>
<dbReference type="GeneID" id="8619180"/>
<dbReference type="KEGG" id="ddi:DDB_G0273175"/>
<dbReference type="KEGG" id="ddi:DDB_G0273875"/>
<dbReference type="dictyBase" id="DDB_G0273175">
    <property type="gene designation" value="cf50-1"/>
</dbReference>
<dbReference type="dictyBase" id="DDB_G0273875">
    <property type="gene designation" value="cf50-2"/>
</dbReference>
<dbReference type="VEuPathDB" id="AmoebaDB:DDB_G0273875"/>
<dbReference type="HOGENOM" id="CLU_073372_3_0_1"/>
<dbReference type="InParanoid" id="Q556R7"/>
<dbReference type="OMA" id="YNWEDIV"/>
<dbReference type="PhylomeDB" id="Q556R7"/>
<dbReference type="PRO" id="PR:Q556R7"/>
<dbReference type="Proteomes" id="UP000002195">
    <property type="component" value="Chromosome 2"/>
</dbReference>
<dbReference type="GO" id="GO:0005576">
    <property type="term" value="C:extracellular region"/>
    <property type="evidence" value="ECO:0000314"/>
    <property type="project" value="dictyBase"/>
</dbReference>
<dbReference type="GO" id="GO:0003796">
    <property type="term" value="F:lysozyme activity"/>
    <property type="evidence" value="ECO:0000314"/>
    <property type="project" value="dictyBase"/>
</dbReference>
<dbReference type="GO" id="GO:0030154">
    <property type="term" value="P:cell differentiation"/>
    <property type="evidence" value="ECO:0000315"/>
    <property type="project" value="dictyBase"/>
</dbReference>
<dbReference type="GO" id="GO:0048870">
    <property type="term" value="P:cell motility"/>
    <property type="evidence" value="ECO:0000315"/>
    <property type="project" value="dictyBase"/>
</dbReference>
<dbReference type="GO" id="GO:0016998">
    <property type="term" value="P:cell wall macromolecule catabolic process"/>
    <property type="evidence" value="ECO:0007669"/>
    <property type="project" value="InterPro"/>
</dbReference>
<dbReference type="GO" id="GO:0098609">
    <property type="term" value="P:cell-cell adhesion"/>
    <property type="evidence" value="ECO:0000315"/>
    <property type="project" value="dictyBase"/>
</dbReference>
<dbReference type="GO" id="GO:0042742">
    <property type="term" value="P:defense response to bacterium"/>
    <property type="evidence" value="ECO:0007669"/>
    <property type="project" value="UniProtKB-KW"/>
</dbReference>
<dbReference type="GO" id="GO:0042593">
    <property type="term" value="P:glucose homeostasis"/>
    <property type="evidence" value="ECO:0000315"/>
    <property type="project" value="dictyBase"/>
</dbReference>
<dbReference type="GO" id="GO:0031640">
    <property type="term" value="P:killing of cells of another organism"/>
    <property type="evidence" value="ECO:0007669"/>
    <property type="project" value="UniProtKB-KW"/>
</dbReference>
<dbReference type="GO" id="GO:0031158">
    <property type="term" value="P:negative regulation of aggregate size involved in sorocarp development"/>
    <property type="evidence" value="ECO:0000315"/>
    <property type="project" value="dictyBase"/>
</dbReference>
<dbReference type="GO" id="GO:0045861">
    <property type="term" value="P:negative regulation of proteolysis"/>
    <property type="evidence" value="ECO:0000315"/>
    <property type="project" value="dictyBase"/>
</dbReference>
<dbReference type="GO" id="GO:0009253">
    <property type="term" value="P:peptidoglycan catabolic process"/>
    <property type="evidence" value="ECO:0007669"/>
    <property type="project" value="InterPro"/>
</dbReference>
<dbReference type="GO" id="GO:0007165">
    <property type="term" value="P:signal transduction"/>
    <property type="evidence" value="ECO:0000315"/>
    <property type="project" value="dictyBase"/>
</dbReference>
<dbReference type="CDD" id="cd06416">
    <property type="entry name" value="GH25_Lys1-like"/>
    <property type="match status" value="1"/>
</dbReference>
<dbReference type="FunFam" id="3.20.20.80:FF:000249">
    <property type="entry name" value="Counting factor 50"/>
    <property type="match status" value="1"/>
</dbReference>
<dbReference type="Gene3D" id="3.20.20.80">
    <property type="entry name" value="Glycosidases"/>
    <property type="match status" value="1"/>
</dbReference>
<dbReference type="InterPro" id="IPR051595">
    <property type="entry name" value="GH25_Enzymes"/>
</dbReference>
<dbReference type="InterPro" id="IPR002053">
    <property type="entry name" value="Glyco_hydro_25"/>
</dbReference>
<dbReference type="InterPro" id="IPR017853">
    <property type="entry name" value="Glycoside_hydrolase_SF"/>
</dbReference>
<dbReference type="PANTHER" id="PTHR23208:SF11">
    <property type="entry name" value="COUNTING FACTOR 45-1-RELATED"/>
    <property type="match status" value="1"/>
</dbReference>
<dbReference type="PANTHER" id="PTHR23208">
    <property type="entry name" value="LYSOZYME PROTEIN"/>
    <property type="match status" value="1"/>
</dbReference>
<dbReference type="Pfam" id="PF01183">
    <property type="entry name" value="Glyco_hydro_25"/>
    <property type="match status" value="1"/>
</dbReference>
<dbReference type="SUPFAM" id="SSF51445">
    <property type="entry name" value="(Trans)glycosidases"/>
    <property type="match status" value="1"/>
</dbReference>
<dbReference type="PROSITE" id="PS51904">
    <property type="entry name" value="GLYCOSYL_HYDROL_F25_2"/>
    <property type="match status" value="1"/>
</dbReference>
<name>CF50_DICDI</name>
<sequence>MNKMNNIFLIISSIILSIVIFVSGECAIDFSSEISVGISDSQWSCLASNNQRVIIQVWSGGGQYNSNISSVVSAAEQAGFDNIDLYAFLCSECDGNYPASSAIQSLVSSLKSDGINFNMLWIDVEQCDGCWGAESDNADYVQEAVETAQGLGVLVGVYSSEGEWPQTVGNLSTLSQYPLWYAHYDDNPSFSDTAFYEFGGWTSPAMKQYIGNTNQCGVSVDLDFYGSGSGCSTSSGSASGSASGSASGSASGSNSGSSNSGSSNSGSSNSGSNSGSSNSGSGNSGSSNSGSASGSGTGSGSSI</sequence>
<keyword id="KW-0929">Antimicrobial</keyword>
<keyword id="KW-0081">Bacteriolytic enzyme</keyword>
<keyword id="KW-0903">Direct protein sequencing</keyword>
<keyword id="KW-0325">Glycoprotein</keyword>
<keyword id="KW-0326">Glycosidase</keyword>
<keyword id="KW-0378">Hydrolase</keyword>
<keyword id="KW-1185">Reference proteome</keyword>
<keyword id="KW-0677">Repeat</keyword>
<keyword id="KW-0964">Secreted</keyword>
<keyword id="KW-0732">Signal</keyword>
<comment type="function">
    <text>Cell-counting factor that limits the maximum size of the multicellular structure during aggregation. Has a very low lysozyme activity.</text>
</comment>
<comment type="catalytic activity">
    <reaction>
        <text>Hydrolysis of (1-&gt;4)-beta-linkages between N-acetylmuramic acid and N-acetyl-D-glucosamine residues in a peptidoglycan and between N-acetyl-D-glucosamine residues in chitodextrins.</text>
        <dbReference type="EC" id="3.2.1.17"/>
    </reaction>
</comment>
<comment type="subunit">
    <text evidence="5 6 7 8">Monomer. Component of the counting factor (CF) complex, which includes cf60, cf50, cf45-1 and ctnA.</text>
</comment>
<comment type="subcellular location">
    <subcellularLocation>
        <location>Secreted</location>
    </subcellularLocation>
</comment>
<comment type="disruption phenotype">
    <text evidence="6">In the absence of CF50, secreted countin is degraded suggesting that it may protect countin from degradation.</text>
</comment>
<comment type="similarity">
    <text evidence="3 9">Belongs to the glycosyl hydrolase 25 family.</text>
</comment>
<comment type="caution">
    <text evidence="9">The gene for this protein is duplicated in strains AX3 and AX4. These strains contain a duplication of a segment of 750 kb of chromosome 2 compared to the corresponding sequence in strain AX2.</text>
</comment>
<accession>Q556R7</accession>
<accession>Q86JX6</accession>
<accession>Q95VT3</accession>
<feature type="signal peptide" evidence="6">
    <location>
        <begin position="1"/>
        <end position="24"/>
    </location>
</feature>
<feature type="chain" id="PRO_0000330647" description="Counting factor 50">
    <location>
        <begin position="25"/>
        <end position="303"/>
    </location>
</feature>
<feature type="domain" description="Ch-type lysozyme" evidence="3">
    <location>
        <begin position="28"/>
        <end position="240"/>
    </location>
</feature>
<feature type="region of interest" description="S-G-S motif repeats">
    <location>
        <begin position="226"/>
        <end position="303"/>
    </location>
</feature>
<feature type="region of interest" description="Disordered" evidence="4">
    <location>
        <begin position="236"/>
        <end position="303"/>
    </location>
</feature>
<feature type="compositionally biased region" description="Low complexity" evidence="4">
    <location>
        <begin position="236"/>
        <end position="292"/>
    </location>
</feature>
<feature type="compositionally biased region" description="Gly residues" evidence="4">
    <location>
        <begin position="293"/>
        <end position="303"/>
    </location>
</feature>
<feature type="active site" evidence="1">
    <location>
        <position position="125"/>
    </location>
</feature>
<feature type="glycosylation site" description="N-linked (GlcNAc...) asparagine" evidence="2">
    <location>
        <position position="67"/>
    </location>
</feature>
<feature type="glycosylation site" description="N-linked (GlcNAc...) asparagine" evidence="2">
    <location>
        <position position="170"/>
    </location>
</feature>
<reference key="1">
    <citation type="journal article" date="2002" name="Development">
        <title>The different components of a multisubunit cell number-counting factor have both unique and overlapping functions.</title>
        <authorList>
            <person name="Brock D.A."/>
            <person name="Hatton R.D."/>
            <person name="Giurgiutiu D.-V."/>
            <person name="Scott B."/>
            <person name="Ammann R."/>
            <person name="Gomer R.H."/>
        </authorList>
    </citation>
    <scope>NUCLEOTIDE SEQUENCE [GENOMIC DNA]</scope>
    <scope>PROTEIN SEQUENCE OF 25-42</scope>
    <scope>IDENTIFICATION IN THE CF COMPLEX</scope>
    <scope>SUBUNIT</scope>
    <scope>DISRUPTION PHENOTYPE</scope>
</reference>
<reference key="2">
    <citation type="journal article" date="2002" name="Nature">
        <title>Sequence and analysis of chromosome 2 of Dictyostelium discoideum.</title>
        <authorList>
            <person name="Gloeckner G."/>
            <person name="Eichinger L."/>
            <person name="Szafranski K."/>
            <person name="Pachebat J.A."/>
            <person name="Bankier A.T."/>
            <person name="Dear P.H."/>
            <person name="Lehmann R."/>
            <person name="Baumgart C."/>
            <person name="Parra G."/>
            <person name="Abril J.F."/>
            <person name="Guigo R."/>
            <person name="Kumpf K."/>
            <person name="Tunggal B."/>
            <person name="Cox E.C."/>
            <person name="Quail M.A."/>
            <person name="Platzer M."/>
            <person name="Rosenthal A."/>
            <person name="Noegel A.A."/>
        </authorList>
    </citation>
    <scope>NUCLEOTIDE SEQUENCE [LARGE SCALE GENOMIC DNA]</scope>
    <source>
        <strain>AX4</strain>
    </source>
</reference>
<reference key="3">
    <citation type="journal article" date="2005" name="Nature">
        <title>The genome of the social amoeba Dictyostelium discoideum.</title>
        <authorList>
            <person name="Eichinger L."/>
            <person name="Pachebat J.A."/>
            <person name="Gloeckner G."/>
            <person name="Rajandream M.A."/>
            <person name="Sucgang R."/>
            <person name="Berriman M."/>
            <person name="Song J."/>
            <person name="Olsen R."/>
            <person name="Szafranski K."/>
            <person name="Xu Q."/>
            <person name="Tunggal B."/>
            <person name="Kummerfeld S."/>
            <person name="Madera M."/>
            <person name="Konfortov B.A."/>
            <person name="Rivero F."/>
            <person name="Bankier A.T."/>
            <person name="Lehmann R."/>
            <person name="Hamlin N."/>
            <person name="Davies R."/>
            <person name="Gaudet P."/>
            <person name="Fey P."/>
            <person name="Pilcher K."/>
            <person name="Chen G."/>
            <person name="Saunders D."/>
            <person name="Sodergren E.J."/>
            <person name="Davis P."/>
            <person name="Kerhornou A."/>
            <person name="Nie X."/>
            <person name="Hall N."/>
            <person name="Anjard C."/>
            <person name="Hemphill L."/>
            <person name="Bason N."/>
            <person name="Farbrother P."/>
            <person name="Desany B."/>
            <person name="Just E."/>
            <person name="Morio T."/>
            <person name="Rost R."/>
            <person name="Churcher C.M."/>
            <person name="Cooper J."/>
            <person name="Haydock S."/>
            <person name="van Driessche N."/>
            <person name="Cronin A."/>
            <person name="Goodhead I."/>
            <person name="Muzny D.M."/>
            <person name="Mourier T."/>
            <person name="Pain A."/>
            <person name="Lu M."/>
            <person name="Harper D."/>
            <person name="Lindsay R."/>
            <person name="Hauser H."/>
            <person name="James K.D."/>
            <person name="Quiles M."/>
            <person name="Madan Babu M."/>
            <person name="Saito T."/>
            <person name="Buchrieser C."/>
            <person name="Wardroper A."/>
            <person name="Felder M."/>
            <person name="Thangavelu M."/>
            <person name="Johnson D."/>
            <person name="Knights A."/>
            <person name="Loulseged H."/>
            <person name="Mungall K.L."/>
            <person name="Oliver K."/>
            <person name="Price C."/>
            <person name="Quail M.A."/>
            <person name="Urushihara H."/>
            <person name="Hernandez J."/>
            <person name="Rabbinowitsch E."/>
            <person name="Steffen D."/>
            <person name="Sanders M."/>
            <person name="Ma J."/>
            <person name="Kohara Y."/>
            <person name="Sharp S."/>
            <person name="Simmonds M.N."/>
            <person name="Spiegler S."/>
            <person name="Tivey A."/>
            <person name="Sugano S."/>
            <person name="White B."/>
            <person name="Walker D."/>
            <person name="Woodward J.R."/>
            <person name="Winckler T."/>
            <person name="Tanaka Y."/>
            <person name="Shaulsky G."/>
            <person name="Schleicher M."/>
            <person name="Weinstock G.M."/>
            <person name="Rosenthal A."/>
            <person name="Cox E.C."/>
            <person name="Chisholm R.L."/>
            <person name="Gibbs R.A."/>
            <person name="Loomis W.F."/>
            <person name="Platzer M."/>
            <person name="Kay R.R."/>
            <person name="Williams J.G."/>
            <person name="Dear P.H."/>
            <person name="Noegel A.A."/>
            <person name="Barrell B.G."/>
            <person name="Kuspa A."/>
        </authorList>
    </citation>
    <scope>NUCLEOTIDE SEQUENCE [LARGE SCALE GENOMIC DNA]</scope>
    <source>
        <strain>AX4</strain>
    </source>
</reference>
<reference key="4">
    <citation type="journal article" date="1999" name="Genes Dev.">
        <title>A cell-counting factor regulating structure size in Dictyostelium.</title>
        <authorList>
            <person name="Brock D.A."/>
            <person name="Gomer R.H."/>
        </authorList>
    </citation>
    <scope>IDENTIFICATION IN THE CF COMPLEX</scope>
</reference>
<reference key="5">
    <citation type="journal article" date="2003" name="Eukaryot. Cell">
        <title>CF45-1, a secreted protein which participates in Dictyostelium group size regulation.</title>
        <authorList>
            <person name="Brock D.A."/>
            <person name="Hatton R.D."/>
            <person name="Giurgiutiu D.-V."/>
            <person name="Scott B."/>
            <person name="Jang W."/>
            <person name="Ammann R."/>
            <person name="Gomer R.H."/>
        </authorList>
    </citation>
    <scope>IDENTIFICATION IN THE CF COMPLEX</scope>
</reference>
<reference key="6">
    <citation type="journal article" date="2006" name="Eukaryot. Cell">
        <title>A 60-kilodalton protein component of the counting factor complex regulates group size in Dictyostelium discoideum.</title>
        <authorList>
            <person name="Brock D.A."/>
            <person name="van Egmond W.N."/>
            <person name="Shamoo Y."/>
            <person name="Hatton R.D."/>
            <person name="Gomer R.H."/>
        </authorList>
    </citation>
    <scope>IDENTIFICATION IN THE CF COMPLEX</scope>
</reference>
<proteinExistence type="evidence at protein level"/>
<evidence type="ECO:0000250" key="1"/>
<evidence type="ECO:0000255" key="2"/>
<evidence type="ECO:0000255" key="3">
    <source>
        <dbReference type="PROSITE-ProRule" id="PRU01252"/>
    </source>
</evidence>
<evidence type="ECO:0000256" key="4">
    <source>
        <dbReference type="SAM" id="MobiDB-lite"/>
    </source>
</evidence>
<evidence type="ECO:0000269" key="5">
    <source>
    </source>
</evidence>
<evidence type="ECO:0000269" key="6">
    <source>
    </source>
</evidence>
<evidence type="ECO:0000269" key="7">
    <source>
    </source>
</evidence>
<evidence type="ECO:0000269" key="8">
    <source>
    </source>
</evidence>
<evidence type="ECO:0000305" key="9"/>
<gene>
    <name type="primary">cf50-1</name>
    <name type="ORF">DDB_G0273175</name>
</gene>
<gene>
    <name type="primary">cf50-2</name>
    <name type="ORF">DDB_G0273875</name>
</gene>
<organism>
    <name type="scientific">Dictyostelium discoideum</name>
    <name type="common">Social amoeba</name>
    <dbReference type="NCBI Taxonomy" id="44689"/>
    <lineage>
        <taxon>Eukaryota</taxon>
        <taxon>Amoebozoa</taxon>
        <taxon>Evosea</taxon>
        <taxon>Eumycetozoa</taxon>
        <taxon>Dictyostelia</taxon>
        <taxon>Dictyosteliales</taxon>
        <taxon>Dictyosteliaceae</taxon>
        <taxon>Dictyostelium</taxon>
    </lineage>
</organism>